<dbReference type="EC" id="2.5.1.3" evidence="1"/>
<dbReference type="EMBL" id="CP000269">
    <property type="protein sequence ID" value="ABR89197.1"/>
    <property type="molecule type" value="Genomic_DNA"/>
</dbReference>
<dbReference type="RefSeq" id="WP_012078183.1">
    <property type="nucleotide sequence ID" value="NC_009659.1"/>
</dbReference>
<dbReference type="SMR" id="A6SUR1"/>
<dbReference type="STRING" id="375286.mma_0318"/>
<dbReference type="KEGG" id="mms:mma_0318"/>
<dbReference type="eggNOG" id="COG0352">
    <property type="taxonomic scope" value="Bacteria"/>
</dbReference>
<dbReference type="HOGENOM" id="CLU_018272_3_1_4"/>
<dbReference type="OrthoDB" id="9810880at2"/>
<dbReference type="UniPathway" id="UPA00060">
    <property type="reaction ID" value="UER00141"/>
</dbReference>
<dbReference type="Proteomes" id="UP000006388">
    <property type="component" value="Chromosome"/>
</dbReference>
<dbReference type="GO" id="GO:0005737">
    <property type="term" value="C:cytoplasm"/>
    <property type="evidence" value="ECO:0007669"/>
    <property type="project" value="TreeGrafter"/>
</dbReference>
<dbReference type="GO" id="GO:0000287">
    <property type="term" value="F:magnesium ion binding"/>
    <property type="evidence" value="ECO:0007669"/>
    <property type="project" value="UniProtKB-UniRule"/>
</dbReference>
<dbReference type="GO" id="GO:0004789">
    <property type="term" value="F:thiamine-phosphate diphosphorylase activity"/>
    <property type="evidence" value="ECO:0007669"/>
    <property type="project" value="UniProtKB-UniRule"/>
</dbReference>
<dbReference type="GO" id="GO:0009228">
    <property type="term" value="P:thiamine biosynthetic process"/>
    <property type="evidence" value="ECO:0007669"/>
    <property type="project" value="UniProtKB-KW"/>
</dbReference>
<dbReference type="GO" id="GO:0009229">
    <property type="term" value="P:thiamine diphosphate biosynthetic process"/>
    <property type="evidence" value="ECO:0007669"/>
    <property type="project" value="UniProtKB-UniRule"/>
</dbReference>
<dbReference type="CDD" id="cd00564">
    <property type="entry name" value="TMP_TenI"/>
    <property type="match status" value="1"/>
</dbReference>
<dbReference type="Gene3D" id="3.20.20.70">
    <property type="entry name" value="Aldolase class I"/>
    <property type="match status" value="1"/>
</dbReference>
<dbReference type="HAMAP" id="MF_00097">
    <property type="entry name" value="TMP_synthase"/>
    <property type="match status" value="1"/>
</dbReference>
<dbReference type="InterPro" id="IPR013785">
    <property type="entry name" value="Aldolase_TIM"/>
</dbReference>
<dbReference type="InterPro" id="IPR036206">
    <property type="entry name" value="ThiamineP_synth_sf"/>
</dbReference>
<dbReference type="InterPro" id="IPR022998">
    <property type="entry name" value="ThiamineP_synth_TenI"/>
</dbReference>
<dbReference type="InterPro" id="IPR034291">
    <property type="entry name" value="TMP_synthase"/>
</dbReference>
<dbReference type="NCBIfam" id="TIGR00693">
    <property type="entry name" value="thiE"/>
    <property type="match status" value="1"/>
</dbReference>
<dbReference type="PANTHER" id="PTHR20857">
    <property type="entry name" value="THIAMINE-PHOSPHATE PYROPHOSPHORYLASE"/>
    <property type="match status" value="1"/>
</dbReference>
<dbReference type="PANTHER" id="PTHR20857:SF15">
    <property type="entry name" value="THIAMINE-PHOSPHATE SYNTHASE"/>
    <property type="match status" value="1"/>
</dbReference>
<dbReference type="Pfam" id="PF02581">
    <property type="entry name" value="TMP-TENI"/>
    <property type="match status" value="1"/>
</dbReference>
<dbReference type="SUPFAM" id="SSF51391">
    <property type="entry name" value="Thiamin phosphate synthase"/>
    <property type="match status" value="1"/>
</dbReference>
<organism>
    <name type="scientific">Janthinobacterium sp. (strain Marseille)</name>
    <name type="common">Minibacterium massiliensis</name>
    <dbReference type="NCBI Taxonomy" id="375286"/>
    <lineage>
        <taxon>Bacteria</taxon>
        <taxon>Pseudomonadati</taxon>
        <taxon>Pseudomonadota</taxon>
        <taxon>Betaproteobacteria</taxon>
        <taxon>Burkholderiales</taxon>
        <taxon>Oxalobacteraceae</taxon>
        <taxon>Janthinobacterium</taxon>
    </lineage>
</organism>
<gene>
    <name evidence="1" type="primary">thiE</name>
    <name type="ordered locus">mma_0318</name>
</gene>
<evidence type="ECO:0000255" key="1">
    <source>
        <dbReference type="HAMAP-Rule" id="MF_00097"/>
    </source>
</evidence>
<sequence>MKSNLHGLYLVTPDWDDTRKLLEITELALKGGVSLLQYRHKTADAALRQEQAECLQALCRSYEVPFIINDHIDLCLGINADGIHVGGTDKSVAEVRAIIGPDKILGSSCYGDLALAHAAEAAGASYVAFGGFYPSKVKKYPVTTAPTIVSDWKAQGKVPSCVIGGMTRDNSAPLVANGADMVAAISSVYLAGDPQAAARAFVSLFAK</sequence>
<name>THIE_JANMA</name>
<feature type="chain" id="PRO_1000093671" description="Thiamine-phosphate synthase">
    <location>
        <begin position="1"/>
        <end position="207"/>
    </location>
</feature>
<feature type="binding site" evidence="1">
    <location>
        <begin position="37"/>
        <end position="41"/>
    </location>
    <ligand>
        <name>4-amino-2-methyl-5-(diphosphooxymethyl)pyrimidine</name>
        <dbReference type="ChEBI" id="CHEBI:57841"/>
    </ligand>
</feature>
<feature type="binding site" evidence="1">
    <location>
        <position position="69"/>
    </location>
    <ligand>
        <name>4-amino-2-methyl-5-(diphosphooxymethyl)pyrimidine</name>
        <dbReference type="ChEBI" id="CHEBI:57841"/>
    </ligand>
</feature>
<feature type="binding site" evidence="1">
    <location>
        <position position="70"/>
    </location>
    <ligand>
        <name>Mg(2+)</name>
        <dbReference type="ChEBI" id="CHEBI:18420"/>
    </ligand>
</feature>
<feature type="binding site" evidence="1">
    <location>
        <position position="89"/>
    </location>
    <ligand>
        <name>Mg(2+)</name>
        <dbReference type="ChEBI" id="CHEBI:18420"/>
    </ligand>
</feature>
<feature type="binding site" evidence="1">
    <location>
        <position position="108"/>
    </location>
    <ligand>
        <name>4-amino-2-methyl-5-(diphosphooxymethyl)pyrimidine</name>
        <dbReference type="ChEBI" id="CHEBI:57841"/>
    </ligand>
</feature>
<feature type="binding site" evidence="1">
    <location>
        <position position="138"/>
    </location>
    <ligand>
        <name>4-amino-2-methyl-5-(diphosphooxymethyl)pyrimidine</name>
        <dbReference type="ChEBI" id="CHEBI:57841"/>
    </ligand>
</feature>
<feature type="binding site" evidence="1">
    <location>
        <position position="165"/>
    </location>
    <ligand>
        <name>2-[(2R,5Z)-2-carboxy-4-methylthiazol-5(2H)-ylidene]ethyl phosphate</name>
        <dbReference type="ChEBI" id="CHEBI:62899"/>
    </ligand>
</feature>
<feature type="binding site" evidence="1">
    <location>
        <begin position="185"/>
        <end position="186"/>
    </location>
    <ligand>
        <name>2-[(2R,5Z)-2-carboxy-4-methylthiazol-5(2H)-ylidene]ethyl phosphate</name>
        <dbReference type="ChEBI" id="CHEBI:62899"/>
    </ligand>
</feature>
<proteinExistence type="inferred from homology"/>
<accession>A6SUR1</accession>
<protein>
    <recommendedName>
        <fullName evidence="1">Thiamine-phosphate synthase</fullName>
        <shortName evidence="1">TP synthase</shortName>
        <shortName evidence="1">TPS</shortName>
        <ecNumber evidence="1">2.5.1.3</ecNumber>
    </recommendedName>
    <alternativeName>
        <fullName evidence="1">Thiamine-phosphate pyrophosphorylase</fullName>
        <shortName evidence="1">TMP pyrophosphorylase</shortName>
        <shortName evidence="1">TMP-PPase</shortName>
    </alternativeName>
</protein>
<keyword id="KW-0460">Magnesium</keyword>
<keyword id="KW-0479">Metal-binding</keyword>
<keyword id="KW-0784">Thiamine biosynthesis</keyword>
<keyword id="KW-0808">Transferase</keyword>
<comment type="function">
    <text evidence="1">Condenses 4-methyl-5-(beta-hydroxyethyl)thiazole monophosphate (THZ-P) and 2-methyl-4-amino-5-hydroxymethyl pyrimidine pyrophosphate (HMP-PP) to form thiamine monophosphate (TMP).</text>
</comment>
<comment type="catalytic activity">
    <reaction evidence="1">
        <text>2-[(2R,5Z)-2-carboxy-4-methylthiazol-5(2H)-ylidene]ethyl phosphate + 4-amino-2-methyl-5-(diphosphooxymethyl)pyrimidine + 2 H(+) = thiamine phosphate + CO2 + diphosphate</text>
        <dbReference type="Rhea" id="RHEA:47844"/>
        <dbReference type="ChEBI" id="CHEBI:15378"/>
        <dbReference type="ChEBI" id="CHEBI:16526"/>
        <dbReference type="ChEBI" id="CHEBI:33019"/>
        <dbReference type="ChEBI" id="CHEBI:37575"/>
        <dbReference type="ChEBI" id="CHEBI:57841"/>
        <dbReference type="ChEBI" id="CHEBI:62899"/>
        <dbReference type="EC" id="2.5.1.3"/>
    </reaction>
</comment>
<comment type="catalytic activity">
    <reaction evidence="1">
        <text>2-(2-carboxy-4-methylthiazol-5-yl)ethyl phosphate + 4-amino-2-methyl-5-(diphosphooxymethyl)pyrimidine + 2 H(+) = thiamine phosphate + CO2 + diphosphate</text>
        <dbReference type="Rhea" id="RHEA:47848"/>
        <dbReference type="ChEBI" id="CHEBI:15378"/>
        <dbReference type="ChEBI" id="CHEBI:16526"/>
        <dbReference type="ChEBI" id="CHEBI:33019"/>
        <dbReference type="ChEBI" id="CHEBI:37575"/>
        <dbReference type="ChEBI" id="CHEBI:57841"/>
        <dbReference type="ChEBI" id="CHEBI:62890"/>
        <dbReference type="EC" id="2.5.1.3"/>
    </reaction>
</comment>
<comment type="catalytic activity">
    <reaction evidence="1">
        <text>4-methyl-5-(2-phosphooxyethyl)-thiazole + 4-amino-2-methyl-5-(diphosphooxymethyl)pyrimidine + H(+) = thiamine phosphate + diphosphate</text>
        <dbReference type="Rhea" id="RHEA:22328"/>
        <dbReference type="ChEBI" id="CHEBI:15378"/>
        <dbReference type="ChEBI" id="CHEBI:33019"/>
        <dbReference type="ChEBI" id="CHEBI:37575"/>
        <dbReference type="ChEBI" id="CHEBI:57841"/>
        <dbReference type="ChEBI" id="CHEBI:58296"/>
        <dbReference type="EC" id="2.5.1.3"/>
    </reaction>
</comment>
<comment type="cofactor">
    <cofactor evidence="1">
        <name>Mg(2+)</name>
        <dbReference type="ChEBI" id="CHEBI:18420"/>
    </cofactor>
    <text evidence="1">Binds 1 Mg(2+) ion per subunit.</text>
</comment>
<comment type="pathway">
    <text evidence="1">Cofactor biosynthesis; thiamine diphosphate biosynthesis; thiamine phosphate from 4-amino-2-methyl-5-diphosphomethylpyrimidine and 4-methyl-5-(2-phosphoethyl)-thiazole: step 1/1.</text>
</comment>
<comment type="similarity">
    <text evidence="1">Belongs to the thiamine-phosphate synthase family.</text>
</comment>
<reference key="1">
    <citation type="journal article" date="2007" name="PLoS Genet.">
        <title>Genome analysis of Minibacterium massiliensis highlights the convergent evolution of water-living bacteria.</title>
        <authorList>
            <person name="Audic S."/>
            <person name="Robert C."/>
            <person name="Campagna B."/>
            <person name="Parinello H."/>
            <person name="Claverie J.-M."/>
            <person name="Raoult D."/>
            <person name="Drancourt M."/>
        </authorList>
    </citation>
    <scope>NUCLEOTIDE SEQUENCE [LARGE SCALE GENOMIC DNA]</scope>
    <source>
        <strain>Marseille</strain>
    </source>
</reference>